<accession>Q9PNR1</accession>
<accession>Q0P9M2</accession>
<sequence>MSVKNIRNFSIIAHIDHGKSTLADRIISECGAISDRQMSSQVMDTMDIEKERGITIKAQSVRLNYKFNNENFVLNLIDTPGHVDFSYEVSRSLASCEGALLVVDASQGVEAQTIANVYIALENNLEIIPVINKIDLPNADVEKVKHEIEHIIGIDCKDAICVSAKTGVGIKELIETIITKIPAPKTDDEAPTKALIYDSWFDNYLGALALVRIYEGSIAKNDEVLVMSTDKKHIVQDLFYPHPLSPIKTQSLQSGEVGVVVLGLKTVGDVQVGDTITLVKNKAKEAIGGFEKAKAFVFAGLYPIETDKFEDLRDALDKLKLNDSSITYEPETSLALGFGFRVGFLGLLHMEVIKERLEREFNLDLIATAPTVTYEIYQTDGELIKIQNPSELPPVNKIDHIKEPYVKATIITPSEFLGNLITLLNRKRGVQVKMDYITPERVLLEYDVPLNEIVMDFYDKLKSLTKGYASFDYEPIEFRVGDLVKLDIKVAGENVDALSIIVPNEKAQSKGRELVSAMKEIVPRQLFEVAIQASIGNKIIARETVKSMGKNVTAKCYGGDITRKRKLLEKQKEGKKRMKAIGKVNLPQEAFLSVLKID</sequence>
<dbReference type="EC" id="3.6.5.n1" evidence="1"/>
<dbReference type="EMBL" id="AL111168">
    <property type="protein sequence ID" value="CAL35148.1"/>
    <property type="molecule type" value="Genomic_DNA"/>
</dbReference>
<dbReference type="PIR" id="C81305">
    <property type="entry name" value="C81305"/>
</dbReference>
<dbReference type="RefSeq" id="WP_002837927.1">
    <property type="nucleotide sequence ID" value="NZ_SZUC01000001.1"/>
</dbReference>
<dbReference type="RefSeq" id="YP_002344425.1">
    <property type="nucleotide sequence ID" value="NC_002163.1"/>
</dbReference>
<dbReference type="SMR" id="Q9PNR1"/>
<dbReference type="IntAct" id="Q9PNR1">
    <property type="interactions" value="10"/>
</dbReference>
<dbReference type="STRING" id="192222.Cj1030c"/>
<dbReference type="PaxDb" id="192222-Cj1030c"/>
<dbReference type="EnsemblBacteria" id="CAL35148">
    <property type="protein sequence ID" value="CAL35148"/>
    <property type="gene ID" value="Cj1030c"/>
</dbReference>
<dbReference type="GeneID" id="905322"/>
<dbReference type="KEGG" id="cje:Cj1030c"/>
<dbReference type="PATRIC" id="fig|192222.6.peg.1012"/>
<dbReference type="eggNOG" id="COG0481">
    <property type="taxonomic scope" value="Bacteria"/>
</dbReference>
<dbReference type="HOGENOM" id="CLU_009995_3_3_7"/>
<dbReference type="OrthoDB" id="9801472at2"/>
<dbReference type="Proteomes" id="UP000000799">
    <property type="component" value="Chromosome"/>
</dbReference>
<dbReference type="GO" id="GO:0005886">
    <property type="term" value="C:plasma membrane"/>
    <property type="evidence" value="ECO:0007669"/>
    <property type="project" value="UniProtKB-SubCell"/>
</dbReference>
<dbReference type="GO" id="GO:0005525">
    <property type="term" value="F:GTP binding"/>
    <property type="evidence" value="ECO:0007669"/>
    <property type="project" value="UniProtKB-UniRule"/>
</dbReference>
<dbReference type="GO" id="GO:0003924">
    <property type="term" value="F:GTPase activity"/>
    <property type="evidence" value="ECO:0007669"/>
    <property type="project" value="UniProtKB-UniRule"/>
</dbReference>
<dbReference type="GO" id="GO:0043022">
    <property type="term" value="F:ribosome binding"/>
    <property type="evidence" value="ECO:0007669"/>
    <property type="project" value="UniProtKB-UniRule"/>
</dbReference>
<dbReference type="GO" id="GO:0003746">
    <property type="term" value="F:translation elongation factor activity"/>
    <property type="evidence" value="ECO:0007669"/>
    <property type="project" value="UniProtKB-UniRule"/>
</dbReference>
<dbReference type="GO" id="GO:0045727">
    <property type="term" value="P:positive regulation of translation"/>
    <property type="evidence" value="ECO:0007669"/>
    <property type="project" value="UniProtKB-UniRule"/>
</dbReference>
<dbReference type="CDD" id="cd16260">
    <property type="entry name" value="EF4_III"/>
    <property type="match status" value="1"/>
</dbReference>
<dbReference type="CDD" id="cd01890">
    <property type="entry name" value="LepA"/>
    <property type="match status" value="1"/>
</dbReference>
<dbReference type="CDD" id="cd03709">
    <property type="entry name" value="lepA_C"/>
    <property type="match status" value="1"/>
</dbReference>
<dbReference type="FunFam" id="3.40.50.300:FF:000078">
    <property type="entry name" value="Elongation factor 4"/>
    <property type="match status" value="1"/>
</dbReference>
<dbReference type="FunFam" id="2.40.30.10:FF:000015">
    <property type="entry name" value="Translation factor GUF1, mitochondrial"/>
    <property type="match status" value="1"/>
</dbReference>
<dbReference type="FunFam" id="3.30.70.240:FF:000007">
    <property type="entry name" value="Translation factor GUF1, mitochondrial"/>
    <property type="match status" value="1"/>
</dbReference>
<dbReference type="FunFam" id="3.30.70.2570:FF:000001">
    <property type="entry name" value="Translation factor GUF1, mitochondrial"/>
    <property type="match status" value="1"/>
</dbReference>
<dbReference type="FunFam" id="3.30.70.870:FF:000004">
    <property type="entry name" value="Translation factor GUF1, mitochondrial"/>
    <property type="match status" value="1"/>
</dbReference>
<dbReference type="Gene3D" id="3.30.70.240">
    <property type="match status" value="1"/>
</dbReference>
<dbReference type="Gene3D" id="3.30.70.2570">
    <property type="entry name" value="Elongation factor 4, C-terminal domain"/>
    <property type="match status" value="1"/>
</dbReference>
<dbReference type="Gene3D" id="3.30.70.870">
    <property type="entry name" value="Elongation Factor G (Translational Gtpase), domain 3"/>
    <property type="match status" value="1"/>
</dbReference>
<dbReference type="Gene3D" id="3.40.50.300">
    <property type="entry name" value="P-loop containing nucleotide triphosphate hydrolases"/>
    <property type="match status" value="1"/>
</dbReference>
<dbReference type="Gene3D" id="2.40.30.10">
    <property type="entry name" value="Translation factors"/>
    <property type="match status" value="1"/>
</dbReference>
<dbReference type="HAMAP" id="MF_00071">
    <property type="entry name" value="LepA"/>
    <property type="match status" value="1"/>
</dbReference>
<dbReference type="InterPro" id="IPR006297">
    <property type="entry name" value="EF-4"/>
</dbReference>
<dbReference type="InterPro" id="IPR035647">
    <property type="entry name" value="EFG_III/V"/>
</dbReference>
<dbReference type="InterPro" id="IPR000640">
    <property type="entry name" value="EFG_V-like"/>
</dbReference>
<dbReference type="InterPro" id="IPR004161">
    <property type="entry name" value="EFTu-like_2"/>
</dbReference>
<dbReference type="InterPro" id="IPR031157">
    <property type="entry name" value="G_TR_CS"/>
</dbReference>
<dbReference type="InterPro" id="IPR038363">
    <property type="entry name" value="LepA_C_sf"/>
</dbReference>
<dbReference type="InterPro" id="IPR013842">
    <property type="entry name" value="LepA_CTD"/>
</dbReference>
<dbReference type="InterPro" id="IPR035654">
    <property type="entry name" value="LepA_IV"/>
</dbReference>
<dbReference type="InterPro" id="IPR027417">
    <property type="entry name" value="P-loop_NTPase"/>
</dbReference>
<dbReference type="InterPro" id="IPR005225">
    <property type="entry name" value="Small_GTP-bd"/>
</dbReference>
<dbReference type="InterPro" id="IPR000795">
    <property type="entry name" value="T_Tr_GTP-bd_dom"/>
</dbReference>
<dbReference type="InterPro" id="IPR009000">
    <property type="entry name" value="Transl_B-barrel_sf"/>
</dbReference>
<dbReference type="NCBIfam" id="TIGR01393">
    <property type="entry name" value="lepA"/>
    <property type="match status" value="1"/>
</dbReference>
<dbReference type="NCBIfam" id="TIGR00231">
    <property type="entry name" value="small_GTP"/>
    <property type="match status" value="1"/>
</dbReference>
<dbReference type="PANTHER" id="PTHR43512:SF4">
    <property type="entry name" value="TRANSLATION FACTOR GUF1 HOMOLOG, CHLOROPLASTIC"/>
    <property type="match status" value="1"/>
</dbReference>
<dbReference type="PANTHER" id="PTHR43512">
    <property type="entry name" value="TRANSLATION FACTOR GUF1-RELATED"/>
    <property type="match status" value="1"/>
</dbReference>
<dbReference type="Pfam" id="PF00679">
    <property type="entry name" value="EFG_C"/>
    <property type="match status" value="1"/>
</dbReference>
<dbReference type="Pfam" id="PF00009">
    <property type="entry name" value="GTP_EFTU"/>
    <property type="match status" value="1"/>
</dbReference>
<dbReference type="Pfam" id="PF03144">
    <property type="entry name" value="GTP_EFTU_D2"/>
    <property type="match status" value="1"/>
</dbReference>
<dbReference type="Pfam" id="PF06421">
    <property type="entry name" value="LepA_C"/>
    <property type="match status" value="1"/>
</dbReference>
<dbReference type="PRINTS" id="PR00315">
    <property type="entry name" value="ELONGATNFCT"/>
</dbReference>
<dbReference type="SMART" id="SM00838">
    <property type="entry name" value="EFG_C"/>
    <property type="match status" value="1"/>
</dbReference>
<dbReference type="SUPFAM" id="SSF54980">
    <property type="entry name" value="EF-G C-terminal domain-like"/>
    <property type="match status" value="2"/>
</dbReference>
<dbReference type="SUPFAM" id="SSF52540">
    <property type="entry name" value="P-loop containing nucleoside triphosphate hydrolases"/>
    <property type="match status" value="1"/>
</dbReference>
<dbReference type="SUPFAM" id="SSF50447">
    <property type="entry name" value="Translation proteins"/>
    <property type="match status" value="1"/>
</dbReference>
<dbReference type="PROSITE" id="PS00301">
    <property type="entry name" value="G_TR_1"/>
    <property type="match status" value="1"/>
</dbReference>
<dbReference type="PROSITE" id="PS51722">
    <property type="entry name" value="G_TR_2"/>
    <property type="match status" value="1"/>
</dbReference>
<evidence type="ECO:0000255" key="1">
    <source>
        <dbReference type="HAMAP-Rule" id="MF_00071"/>
    </source>
</evidence>
<feature type="chain" id="PRO_0000176251" description="Elongation factor 4">
    <location>
        <begin position="1"/>
        <end position="598"/>
    </location>
</feature>
<feature type="domain" description="tr-type G">
    <location>
        <begin position="4"/>
        <end position="185"/>
    </location>
</feature>
<feature type="binding site" evidence="1">
    <location>
        <begin position="16"/>
        <end position="21"/>
    </location>
    <ligand>
        <name>GTP</name>
        <dbReference type="ChEBI" id="CHEBI:37565"/>
    </ligand>
</feature>
<feature type="binding site" evidence="1">
    <location>
        <begin position="132"/>
        <end position="135"/>
    </location>
    <ligand>
        <name>GTP</name>
        <dbReference type="ChEBI" id="CHEBI:37565"/>
    </ligand>
</feature>
<reference key="1">
    <citation type="journal article" date="2000" name="Nature">
        <title>The genome sequence of the food-borne pathogen Campylobacter jejuni reveals hypervariable sequences.</title>
        <authorList>
            <person name="Parkhill J."/>
            <person name="Wren B.W."/>
            <person name="Mungall K.L."/>
            <person name="Ketley J.M."/>
            <person name="Churcher C.M."/>
            <person name="Basham D."/>
            <person name="Chillingworth T."/>
            <person name="Davies R.M."/>
            <person name="Feltwell T."/>
            <person name="Holroyd S."/>
            <person name="Jagels K."/>
            <person name="Karlyshev A.V."/>
            <person name="Moule S."/>
            <person name="Pallen M.J."/>
            <person name="Penn C.W."/>
            <person name="Quail M.A."/>
            <person name="Rajandream M.A."/>
            <person name="Rutherford K.M."/>
            <person name="van Vliet A.H.M."/>
            <person name="Whitehead S."/>
            <person name="Barrell B.G."/>
        </authorList>
    </citation>
    <scope>NUCLEOTIDE SEQUENCE [LARGE SCALE GENOMIC DNA]</scope>
    <source>
        <strain>ATCC 700819 / NCTC 11168</strain>
    </source>
</reference>
<keyword id="KW-0997">Cell inner membrane</keyword>
<keyword id="KW-1003">Cell membrane</keyword>
<keyword id="KW-0342">GTP-binding</keyword>
<keyword id="KW-0378">Hydrolase</keyword>
<keyword id="KW-0472">Membrane</keyword>
<keyword id="KW-0547">Nucleotide-binding</keyword>
<keyword id="KW-0648">Protein biosynthesis</keyword>
<keyword id="KW-1185">Reference proteome</keyword>
<comment type="function">
    <text evidence="1">Required for accurate and efficient protein synthesis under certain stress conditions. May act as a fidelity factor of the translation reaction, by catalyzing a one-codon backward translocation of tRNAs on improperly translocated ribosomes. Back-translocation proceeds from a post-translocation (POST) complex to a pre-translocation (PRE) complex, thus giving elongation factor G a second chance to translocate the tRNAs correctly. Binds to ribosomes in a GTP-dependent manner.</text>
</comment>
<comment type="catalytic activity">
    <reaction evidence="1">
        <text>GTP + H2O = GDP + phosphate + H(+)</text>
        <dbReference type="Rhea" id="RHEA:19669"/>
        <dbReference type="ChEBI" id="CHEBI:15377"/>
        <dbReference type="ChEBI" id="CHEBI:15378"/>
        <dbReference type="ChEBI" id="CHEBI:37565"/>
        <dbReference type="ChEBI" id="CHEBI:43474"/>
        <dbReference type="ChEBI" id="CHEBI:58189"/>
        <dbReference type="EC" id="3.6.5.n1"/>
    </reaction>
</comment>
<comment type="subcellular location">
    <subcellularLocation>
        <location evidence="1">Cell inner membrane</location>
        <topology evidence="1">Peripheral membrane protein</topology>
        <orientation evidence="1">Cytoplasmic side</orientation>
    </subcellularLocation>
</comment>
<comment type="similarity">
    <text evidence="1">Belongs to the TRAFAC class translation factor GTPase superfamily. Classic translation factor GTPase family. LepA subfamily.</text>
</comment>
<proteinExistence type="inferred from homology"/>
<organism>
    <name type="scientific">Campylobacter jejuni subsp. jejuni serotype O:2 (strain ATCC 700819 / NCTC 11168)</name>
    <dbReference type="NCBI Taxonomy" id="192222"/>
    <lineage>
        <taxon>Bacteria</taxon>
        <taxon>Pseudomonadati</taxon>
        <taxon>Campylobacterota</taxon>
        <taxon>Epsilonproteobacteria</taxon>
        <taxon>Campylobacterales</taxon>
        <taxon>Campylobacteraceae</taxon>
        <taxon>Campylobacter</taxon>
    </lineage>
</organism>
<name>LEPA_CAMJE</name>
<gene>
    <name evidence="1" type="primary">lepA</name>
    <name type="ordered locus">Cj1030c</name>
</gene>
<protein>
    <recommendedName>
        <fullName evidence="1">Elongation factor 4</fullName>
        <shortName evidence="1">EF-4</shortName>
        <ecNumber evidence="1">3.6.5.n1</ecNumber>
    </recommendedName>
    <alternativeName>
        <fullName evidence="1">Ribosomal back-translocase LepA</fullName>
    </alternativeName>
</protein>